<name>SPT5_MYCMD</name>
<protein>
    <recommendedName>
        <fullName>Transcription elongation factor SPT5</fullName>
    </recommendedName>
    <alternativeName>
        <fullName>Chromatin elongation factor SPT5</fullName>
    </alternativeName>
</protein>
<sequence length="954" mass="104010">MDDNIEIKREDQTSHALVPDKDRKSRIQHGGKRPIDPFAAEDDDEEEERGDAVDEQDQDDDEDDDEDDDDDDDDEDDDEDDEEDDTARGQRRRAKKQRRNRFLDVEAEVDDDEEDLDEEEEELAREDGFIEEDIPDDTEDVQRRAAADNQRLDRFRRQEEDTNAEALAEELRQRYGRSARYAAQSDYAEVPQRLLMPSVEDPSLWGVPCKPGRERDIVMTLVRKAMAENFTSSPMRIISAFCRDSIPGRVYVEARRADDVVKACNGLAGAYARQTTSLHLIPISEMADLLKLQKVQNEIQVGGWVRIKRGKYAGDLAQVLDVSENGEEVGLKMIPRIDLNPKDSGLYTDSLGRKRKKGAGSSATTVAFRPPQRFFNPEEVQKAYPRDTPTKRGSQWVFQNDSYRDGYLEKDVRVTGIITENVNPTLDEITKFAGESSIEDGINKLGAVDLSLIADASKKATEALIQPKDQVEIFEGEQAGVYGTVKAINNEVITIQLEHEDLMDQIVEVPARSVRKRFKPGDHIKVMSGKHADETGLVVKVEDNVTTFLSDLSMQEVSVFSKDIRQAAEVGSGVNVISGYELHNLVQLDAQTVGIIFNIERESFKVLDQTGQVVTVKPHQISTKKDTSRAFALDHDGNEIRAGDMVKEVAGPFSRLRQGQVLHIYQSMVVFLHNREYTENGGVFIARARSLEPLAPKSVSTKTKKDGGDLSKMNPALSNLSGGGANDVRVEGVRRFGGRDMHKGKNVAIIKGPYKTYRGRITETTGNMARIELTSVSKPITVSLDWLVEKDPITGRSTKLNAGGFGGPSRGGHSGTGSRMGGASSNPYSSGSTSMGAGGRYNPYGGSQPAAAVGSYGGSSGTGAGGYGGYSQPVATSAAGASGYGGTGGIGARTPAYNPYAGDGGKTPAYNPYGDGGKTPAYNPLGDGGKTPAYNAAADGGRTPGYNPYAGDGW</sequence>
<accession>Q4PIC4</accession>
<accession>A0A0D1E712</accession>
<keyword id="KW-0507">mRNA processing</keyword>
<keyword id="KW-0539">Nucleus</keyword>
<keyword id="KW-1185">Reference proteome</keyword>
<keyword id="KW-0677">Repeat</keyword>
<keyword id="KW-0804">Transcription</keyword>
<comment type="function">
    <text evidence="1">The SPT4-SPT5 complex mediates both activation and inhibition of transcription elongation, and plays a role in pre-mRNA processing. This complex seems to be important for the stability of the RNA polymerase II elongation machinery on the chromatin template but not for the inherent ability of this machinery to translocate down the gene (By similarity).</text>
</comment>
<comment type="subunit">
    <text evidence="1">Component of the SPT4-SPT5 complex. Interacts with RNA polymerase II (By similarity).</text>
</comment>
<comment type="subcellular location">
    <subcellularLocation>
        <location evidence="1">Nucleus</location>
    </subcellularLocation>
</comment>
<comment type="similarity">
    <text evidence="4">Belongs to the SPT5 family.</text>
</comment>
<feature type="chain" id="PRO_0000238566" description="Transcription elongation factor SPT5">
    <location>
        <begin position="1"/>
        <end position="954"/>
    </location>
</feature>
<feature type="domain" description="KOW" evidence="2">
    <location>
        <begin position="520"/>
        <end position="545"/>
    </location>
</feature>
<feature type="region of interest" description="Disordered" evidence="3">
    <location>
        <begin position="1"/>
        <end position="125"/>
    </location>
</feature>
<feature type="region of interest" description="Disordered" evidence="3">
    <location>
        <begin position="696"/>
        <end position="723"/>
    </location>
</feature>
<feature type="region of interest" description="Disordered" evidence="3">
    <location>
        <begin position="797"/>
        <end position="834"/>
    </location>
</feature>
<feature type="region of interest" description="Disordered" evidence="3">
    <location>
        <begin position="933"/>
        <end position="954"/>
    </location>
</feature>
<feature type="compositionally biased region" description="Basic and acidic residues" evidence="3">
    <location>
        <begin position="1"/>
        <end position="25"/>
    </location>
</feature>
<feature type="compositionally biased region" description="Acidic residues" evidence="3">
    <location>
        <begin position="39"/>
        <end position="85"/>
    </location>
</feature>
<feature type="compositionally biased region" description="Basic residues" evidence="3">
    <location>
        <begin position="89"/>
        <end position="100"/>
    </location>
</feature>
<feature type="compositionally biased region" description="Acidic residues" evidence="3">
    <location>
        <begin position="105"/>
        <end position="125"/>
    </location>
</feature>
<feature type="compositionally biased region" description="Gly residues" evidence="3">
    <location>
        <begin position="803"/>
        <end position="820"/>
    </location>
</feature>
<feature type="compositionally biased region" description="Polar residues" evidence="3">
    <location>
        <begin position="823"/>
        <end position="834"/>
    </location>
</feature>
<dbReference type="EMBL" id="CM003140">
    <property type="protein sequence ID" value="KIS71699.1"/>
    <property type="molecule type" value="Genomic_DNA"/>
</dbReference>
<dbReference type="RefSeq" id="XP_011386622.1">
    <property type="nucleotide sequence ID" value="XM_011388320.1"/>
</dbReference>
<dbReference type="SMR" id="Q4PIC4"/>
<dbReference type="FunCoup" id="Q4PIC4">
    <property type="interactions" value="666"/>
</dbReference>
<dbReference type="STRING" id="237631.Q4PIC4"/>
<dbReference type="EnsemblFungi" id="KIS71699">
    <property type="protein sequence ID" value="KIS71699"/>
    <property type="gene ID" value="UMAG_10033"/>
</dbReference>
<dbReference type="GeneID" id="23566108"/>
<dbReference type="KEGG" id="uma:UMAG_10033"/>
<dbReference type="VEuPathDB" id="FungiDB:UMAG_10033"/>
<dbReference type="eggNOG" id="KOG1999">
    <property type="taxonomic scope" value="Eukaryota"/>
</dbReference>
<dbReference type="HOGENOM" id="CLU_003537_1_1_1"/>
<dbReference type="InParanoid" id="Q4PIC4"/>
<dbReference type="OrthoDB" id="28901at2759"/>
<dbReference type="Proteomes" id="UP000000561">
    <property type="component" value="Chromosome 1"/>
</dbReference>
<dbReference type="GO" id="GO:0032044">
    <property type="term" value="C:DSIF complex"/>
    <property type="evidence" value="ECO:0000318"/>
    <property type="project" value="GO_Central"/>
</dbReference>
<dbReference type="GO" id="GO:0140463">
    <property type="term" value="F:chromatin-protein adaptor activity"/>
    <property type="evidence" value="ECO:0007669"/>
    <property type="project" value="EnsemblFungi"/>
</dbReference>
<dbReference type="GO" id="GO:0003729">
    <property type="term" value="F:mRNA binding"/>
    <property type="evidence" value="ECO:0000318"/>
    <property type="project" value="GO_Central"/>
</dbReference>
<dbReference type="GO" id="GO:0003711">
    <property type="term" value="F:transcription elongation factor activity"/>
    <property type="evidence" value="ECO:0007669"/>
    <property type="project" value="EnsemblFungi"/>
</dbReference>
<dbReference type="GO" id="GO:0006397">
    <property type="term" value="P:mRNA processing"/>
    <property type="evidence" value="ECO:0007669"/>
    <property type="project" value="UniProtKB-KW"/>
</dbReference>
<dbReference type="GO" id="GO:0032784">
    <property type="term" value="P:regulation of DNA-templated transcription elongation"/>
    <property type="evidence" value="ECO:0007669"/>
    <property type="project" value="InterPro"/>
</dbReference>
<dbReference type="GO" id="GO:0006357">
    <property type="term" value="P:regulation of transcription by RNA polymerase II"/>
    <property type="evidence" value="ECO:0007669"/>
    <property type="project" value="InterPro"/>
</dbReference>
<dbReference type="GO" id="GO:0006368">
    <property type="term" value="P:transcription elongation by RNA polymerase II"/>
    <property type="evidence" value="ECO:0000318"/>
    <property type="project" value="GO_Central"/>
</dbReference>
<dbReference type="GO" id="GO:0140673">
    <property type="term" value="P:transcription elongation-coupled chromatin remodeling"/>
    <property type="evidence" value="ECO:0007669"/>
    <property type="project" value="InterPro"/>
</dbReference>
<dbReference type="CDD" id="cd06081">
    <property type="entry name" value="KOW_Spt5_1"/>
    <property type="match status" value="1"/>
</dbReference>
<dbReference type="CDD" id="cd06082">
    <property type="entry name" value="KOW_Spt5_2"/>
    <property type="match status" value="1"/>
</dbReference>
<dbReference type="CDD" id="cd06083">
    <property type="entry name" value="KOW_Spt5_3"/>
    <property type="match status" value="1"/>
</dbReference>
<dbReference type="CDD" id="cd06084">
    <property type="entry name" value="KOW_Spt5_4"/>
    <property type="match status" value="1"/>
</dbReference>
<dbReference type="CDD" id="cd06085">
    <property type="entry name" value="KOW_Spt5_5"/>
    <property type="match status" value="1"/>
</dbReference>
<dbReference type="CDD" id="cd09888">
    <property type="entry name" value="NGN_Euk"/>
    <property type="match status" value="1"/>
</dbReference>
<dbReference type="FunFam" id="2.30.30.30:FF:000018">
    <property type="entry name" value="Transcription elongation factor SPT5"/>
    <property type="match status" value="1"/>
</dbReference>
<dbReference type="FunFam" id="2.30.30.30:FF:000029">
    <property type="entry name" value="Transcription elongation factor SPT5"/>
    <property type="match status" value="1"/>
</dbReference>
<dbReference type="FunFam" id="3.30.70.940:FF:000005">
    <property type="entry name" value="Transcription elongation factor SPT5"/>
    <property type="match status" value="1"/>
</dbReference>
<dbReference type="Gene3D" id="2.30.30.30">
    <property type="match status" value="3"/>
</dbReference>
<dbReference type="Gene3D" id="3.30.70.940">
    <property type="entry name" value="NusG, N-terminal domain"/>
    <property type="match status" value="1"/>
</dbReference>
<dbReference type="InterPro" id="IPR005824">
    <property type="entry name" value="KOW"/>
</dbReference>
<dbReference type="InterPro" id="IPR041973">
    <property type="entry name" value="KOW_Spt5_1"/>
</dbReference>
<dbReference type="InterPro" id="IPR041975">
    <property type="entry name" value="KOW_Spt5_2"/>
</dbReference>
<dbReference type="InterPro" id="IPR041976">
    <property type="entry name" value="KOW_Spt5_3"/>
</dbReference>
<dbReference type="InterPro" id="IPR041977">
    <property type="entry name" value="KOW_Spt5_4"/>
</dbReference>
<dbReference type="InterPro" id="IPR041978">
    <property type="entry name" value="KOW_Spt5_5"/>
</dbReference>
<dbReference type="InterPro" id="IPR005100">
    <property type="entry name" value="NGN-domain"/>
</dbReference>
<dbReference type="InterPro" id="IPR006645">
    <property type="entry name" value="NGN-like_dom"/>
</dbReference>
<dbReference type="InterPro" id="IPR036735">
    <property type="entry name" value="NGN_dom_sf"/>
</dbReference>
<dbReference type="InterPro" id="IPR039385">
    <property type="entry name" value="NGN_Euk"/>
</dbReference>
<dbReference type="InterPro" id="IPR014722">
    <property type="entry name" value="Rib_uL2_dom2"/>
</dbReference>
<dbReference type="InterPro" id="IPR039659">
    <property type="entry name" value="SPT5"/>
</dbReference>
<dbReference type="InterPro" id="IPR022581">
    <property type="entry name" value="Spt5_N"/>
</dbReference>
<dbReference type="InterPro" id="IPR017071">
    <property type="entry name" value="TF_Spt5_eukaryote"/>
</dbReference>
<dbReference type="InterPro" id="IPR008991">
    <property type="entry name" value="Translation_prot_SH3-like_sf"/>
</dbReference>
<dbReference type="PANTHER" id="PTHR11125">
    <property type="entry name" value="SUPPRESSOR OF TY 5"/>
    <property type="match status" value="1"/>
</dbReference>
<dbReference type="PANTHER" id="PTHR11125:SF7">
    <property type="entry name" value="TRANSCRIPTION ELONGATION FACTOR SPT5"/>
    <property type="match status" value="1"/>
</dbReference>
<dbReference type="Pfam" id="PF12815">
    <property type="entry name" value="CTD"/>
    <property type="match status" value="1"/>
</dbReference>
<dbReference type="Pfam" id="PF00467">
    <property type="entry name" value="KOW"/>
    <property type="match status" value="1"/>
</dbReference>
<dbReference type="Pfam" id="PF23042">
    <property type="entry name" value="KOW1_SPT5"/>
    <property type="match status" value="1"/>
</dbReference>
<dbReference type="Pfam" id="PF23284">
    <property type="entry name" value="KOW2_Spt5"/>
    <property type="match status" value="1"/>
</dbReference>
<dbReference type="Pfam" id="PF23291">
    <property type="entry name" value="KOW4_SPT5"/>
    <property type="match status" value="1"/>
</dbReference>
<dbReference type="Pfam" id="PF23290">
    <property type="entry name" value="KOW5_SPT5"/>
    <property type="match status" value="1"/>
</dbReference>
<dbReference type="Pfam" id="PF23037">
    <property type="entry name" value="KOWx_SPT5"/>
    <property type="match status" value="1"/>
</dbReference>
<dbReference type="Pfam" id="PF03439">
    <property type="entry name" value="Spt5-NGN"/>
    <property type="match status" value="1"/>
</dbReference>
<dbReference type="Pfam" id="PF11942">
    <property type="entry name" value="Spt5_N"/>
    <property type="match status" value="1"/>
</dbReference>
<dbReference type="PIRSF" id="PIRSF036945">
    <property type="entry name" value="Spt5"/>
    <property type="match status" value="1"/>
</dbReference>
<dbReference type="SMART" id="SM00739">
    <property type="entry name" value="KOW"/>
    <property type="match status" value="5"/>
</dbReference>
<dbReference type="SMART" id="SM00738">
    <property type="entry name" value="NGN"/>
    <property type="match status" value="1"/>
</dbReference>
<dbReference type="SUPFAM" id="SSF50104">
    <property type="entry name" value="Translation proteins SH3-like domain"/>
    <property type="match status" value="1"/>
</dbReference>
<proteinExistence type="inferred from homology"/>
<gene>
    <name type="primary">SPT5</name>
    <name type="ORF">UMAG_10033</name>
</gene>
<organism>
    <name type="scientific">Mycosarcoma maydis</name>
    <name type="common">Corn smut fungus</name>
    <name type="synonym">Ustilago maydis</name>
    <dbReference type="NCBI Taxonomy" id="5270"/>
    <lineage>
        <taxon>Eukaryota</taxon>
        <taxon>Fungi</taxon>
        <taxon>Dikarya</taxon>
        <taxon>Basidiomycota</taxon>
        <taxon>Ustilaginomycotina</taxon>
        <taxon>Ustilaginomycetes</taxon>
        <taxon>Ustilaginales</taxon>
        <taxon>Ustilaginaceae</taxon>
        <taxon>Mycosarcoma</taxon>
    </lineage>
</organism>
<reference key="1">
    <citation type="journal article" date="2006" name="Nature">
        <title>Insights from the genome of the biotrophic fungal plant pathogen Ustilago maydis.</title>
        <authorList>
            <person name="Kaemper J."/>
            <person name="Kahmann R."/>
            <person name="Boelker M."/>
            <person name="Ma L.-J."/>
            <person name="Brefort T."/>
            <person name="Saville B.J."/>
            <person name="Banuett F."/>
            <person name="Kronstad J.W."/>
            <person name="Gold S.E."/>
            <person name="Mueller O."/>
            <person name="Perlin M.H."/>
            <person name="Woesten H.A.B."/>
            <person name="de Vries R."/>
            <person name="Ruiz-Herrera J."/>
            <person name="Reynaga-Pena C.G."/>
            <person name="Snetselaar K."/>
            <person name="McCann M."/>
            <person name="Perez-Martin J."/>
            <person name="Feldbruegge M."/>
            <person name="Basse C.W."/>
            <person name="Steinberg G."/>
            <person name="Ibeas J.I."/>
            <person name="Holloman W."/>
            <person name="Guzman P."/>
            <person name="Farman M.L."/>
            <person name="Stajich J.E."/>
            <person name="Sentandreu R."/>
            <person name="Gonzalez-Prieto J.M."/>
            <person name="Kennell J.C."/>
            <person name="Molina L."/>
            <person name="Schirawski J."/>
            <person name="Mendoza-Mendoza A."/>
            <person name="Greilinger D."/>
            <person name="Muench K."/>
            <person name="Roessel N."/>
            <person name="Scherer M."/>
            <person name="Vranes M."/>
            <person name="Ladendorf O."/>
            <person name="Vincon V."/>
            <person name="Fuchs U."/>
            <person name="Sandrock B."/>
            <person name="Meng S."/>
            <person name="Ho E.C.H."/>
            <person name="Cahill M.J."/>
            <person name="Boyce K.J."/>
            <person name="Klose J."/>
            <person name="Klosterman S.J."/>
            <person name="Deelstra H.J."/>
            <person name="Ortiz-Castellanos L."/>
            <person name="Li W."/>
            <person name="Sanchez-Alonso P."/>
            <person name="Schreier P.H."/>
            <person name="Haeuser-Hahn I."/>
            <person name="Vaupel M."/>
            <person name="Koopmann E."/>
            <person name="Friedrich G."/>
            <person name="Voss H."/>
            <person name="Schlueter T."/>
            <person name="Margolis J."/>
            <person name="Platt D."/>
            <person name="Swimmer C."/>
            <person name="Gnirke A."/>
            <person name="Chen F."/>
            <person name="Vysotskaia V."/>
            <person name="Mannhaupt G."/>
            <person name="Gueldener U."/>
            <person name="Muensterkoetter M."/>
            <person name="Haase D."/>
            <person name="Oesterheld M."/>
            <person name="Mewes H.-W."/>
            <person name="Mauceli E.W."/>
            <person name="DeCaprio D."/>
            <person name="Wade C.M."/>
            <person name="Butler J."/>
            <person name="Young S.K."/>
            <person name="Jaffe D.B."/>
            <person name="Calvo S.E."/>
            <person name="Nusbaum C."/>
            <person name="Galagan J.E."/>
            <person name="Birren B.W."/>
        </authorList>
    </citation>
    <scope>NUCLEOTIDE SEQUENCE [LARGE SCALE GENOMIC DNA]</scope>
    <source>
        <strain>DSM 14603 / FGSC 9021 / UM521</strain>
    </source>
</reference>
<reference key="2">
    <citation type="submission" date="2014-09" db="EMBL/GenBank/DDBJ databases">
        <authorList>
            <person name="Gueldener U."/>
            <person name="Muensterkoetter M."/>
            <person name="Walter M.C."/>
            <person name="Mannhaupt G."/>
            <person name="Kahmann R."/>
        </authorList>
    </citation>
    <scope>GENOME REANNOTATION</scope>
    <source>
        <strain>DSM 14603 / FGSC 9021 / UM521</strain>
    </source>
</reference>
<evidence type="ECO:0000250" key="1"/>
<evidence type="ECO:0000255" key="2"/>
<evidence type="ECO:0000256" key="3">
    <source>
        <dbReference type="SAM" id="MobiDB-lite"/>
    </source>
</evidence>
<evidence type="ECO:0000305" key="4"/>